<accession>P43924</accession>
<evidence type="ECO:0000250" key="1"/>
<evidence type="ECO:0000250" key="2">
    <source>
        <dbReference type="UniProtKB" id="P14618"/>
    </source>
</evidence>
<evidence type="ECO:0000305" key="3"/>
<protein>
    <recommendedName>
        <fullName>Pyruvate kinase</fullName>
        <shortName>PK</shortName>
        <ecNumber>2.7.1.40</ecNumber>
    </recommendedName>
</protein>
<feature type="initiator methionine" description="Removed" evidence="1">
    <location>
        <position position="1"/>
    </location>
</feature>
<feature type="chain" id="PRO_0000112075" description="Pyruvate kinase">
    <location>
        <begin position="2"/>
        <end position="478"/>
    </location>
</feature>
<feature type="binding site" evidence="1">
    <location>
        <position position="36"/>
    </location>
    <ligand>
        <name>substrate</name>
    </ligand>
</feature>
<feature type="binding site" evidence="2">
    <location>
        <begin position="38"/>
        <end position="41"/>
    </location>
    <ligand>
        <name>ATP</name>
        <dbReference type="ChEBI" id="CHEBI:30616"/>
    </ligand>
</feature>
<feature type="binding site" evidence="1">
    <location>
        <position position="38"/>
    </location>
    <ligand>
        <name>K(+)</name>
        <dbReference type="ChEBI" id="CHEBI:29103"/>
    </ligand>
</feature>
<feature type="binding site" evidence="1">
    <location>
        <position position="40"/>
    </location>
    <ligand>
        <name>K(+)</name>
        <dbReference type="ChEBI" id="CHEBI:29103"/>
    </ligand>
</feature>
<feature type="binding site" evidence="1">
    <location>
        <position position="70"/>
    </location>
    <ligand>
        <name>K(+)</name>
        <dbReference type="ChEBI" id="CHEBI:29103"/>
    </ligand>
</feature>
<feature type="binding site" evidence="2">
    <location>
        <position position="77"/>
    </location>
    <ligand>
        <name>ATP</name>
        <dbReference type="ChEBI" id="CHEBI:30616"/>
    </ligand>
</feature>
<feature type="binding site" evidence="2">
    <location>
        <position position="160"/>
    </location>
    <ligand>
        <name>ATP</name>
        <dbReference type="ChEBI" id="CHEBI:30616"/>
    </ligand>
</feature>
<feature type="binding site" evidence="1">
    <location>
        <position position="225"/>
    </location>
    <ligand>
        <name>Mg(2+)</name>
        <dbReference type="ChEBI" id="CHEBI:18420"/>
    </ligand>
</feature>
<feature type="binding site" evidence="1">
    <location>
        <position position="251"/>
    </location>
    <ligand>
        <name>substrate</name>
    </ligand>
</feature>
<feature type="binding site" evidence="1">
    <location>
        <position position="252"/>
    </location>
    <ligand>
        <name>Mg(2+)</name>
        <dbReference type="ChEBI" id="CHEBI:18420"/>
    </ligand>
</feature>
<feature type="binding site" evidence="1">
    <location>
        <position position="252"/>
    </location>
    <ligand>
        <name>substrate</name>
    </ligand>
</feature>
<feature type="binding site" evidence="1">
    <location>
        <position position="284"/>
    </location>
    <ligand>
        <name>substrate</name>
    </ligand>
</feature>
<feature type="site" description="Transition state stabilizer" evidence="1">
    <location>
        <position position="223"/>
    </location>
</feature>
<dbReference type="EC" id="2.7.1.40"/>
<dbReference type="EMBL" id="L42023">
    <property type="protein sequence ID" value="AAC23216.1"/>
    <property type="molecule type" value="Genomic_DNA"/>
</dbReference>
<dbReference type="PIR" id="C64130">
    <property type="entry name" value="C64130"/>
</dbReference>
<dbReference type="RefSeq" id="NP_439719.1">
    <property type="nucleotide sequence ID" value="NC_000907.1"/>
</dbReference>
<dbReference type="SMR" id="P43924"/>
<dbReference type="STRING" id="71421.HI_1573"/>
<dbReference type="EnsemblBacteria" id="AAC23216">
    <property type="protein sequence ID" value="AAC23216"/>
    <property type="gene ID" value="HI_1573"/>
</dbReference>
<dbReference type="KEGG" id="hin:HI_1573"/>
<dbReference type="PATRIC" id="fig|71421.8.peg.1645"/>
<dbReference type="eggNOG" id="COG0469">
    <property type="taxonomic scope" value="Bacteria"/>
</dbReference>
<dbReference type="HOGENOM" id="CLU_015439_0_2_6"/>
<dbReference type="OrthoDB" id="9812123at2"/>
<dbReference type="PhylomeDB" id="P43924"/>
<dbReference type="BioCyc" id="HINF71421:G1GJ1-1591-MONOMER"/>
<dbReference type="UniPathway" id="UPA00109">
    <property type="reaction ID" value="UER00188"/>
</dbReference>
<dbReference type="Proteomes" id="UP000000579">
    <property type="component" value="Chromosome"/>
</dbReference>
<dbReference type="GO" id="GO:0005737">
    <property type="term" value="C:cytoplasm"/>
    <property type="evidence" value="ECO:0000318"/>
    <property type="project" value="GO_Central"/>
</dbReference>
<dbReference type="GO" id="GO:0005829">
    <property type="term" value="C:cytosol"/>
    <property type="evidence" value="ECO:0000318"/>
    <property type="project" value="GO_Central"/>
</dbReference>
<dbReference type="GO" id="GO:0005524">
    <property type="term" value="F:ATP binding"/>
    <property type="evidence" value="ECO:0007669"/>
    <property type="project" value="UniProtKB-KW"/>
</dbReference>
<dbReference type="GO" id="GO:0016301">
    <property type="term" value="F:kinase activity"/>
    <property type="evidence" value="ECO:0007669"/>
    <property type="project" value="UniProtKB-KW"/>
</dbReference>
<dbReference type="GO" id="GO:0000287">
    <property type="term" value="F:magnesium ion binding"/>
    <property type="evidence" value="ECO:0007669"/>
    <property type="project" value="InterPro"/>
</dbReference>
<dbReference type="GO" id="GO:0030955">
    <property type="term" value="F:potassium ion binding"/>
    <property type="evidence" value="ECO:0007669"/>
    <property type="project" value="InterPro"/>
</dbReference>
<dbReference type="GO" id="GO:0004743">
    <property type="term" value="F:pyruvate kinase activity"/>
    <property type="evidence" value="ECO:0000318"/>
    <property type="project" value="GO_Central"/>
</dbReference>
<dbReference type="GO" id="GO:0006096">
    <property type="term" value="P:glycolytic process"/>
    <property type="evidence" value="ECO:0000318"/>
    <property type="project" value="GO_Central"/>
</dbReference>
<dbReference type="CDD" id="cd00288">
    <property type="entry name" value="Pyruvate_Kinase"/>
    <property type="match status" value="1"/>
</dbReference>
<dbReference type="FunFam" id="2.40.33.10:FF:000002">
    <property type="entry name" value="Pyruvate kinase"/>
    <property type="match status" value="1"/>
</dbReference>
<dbReference type="FunFam" id="3.40.1380.20:FF:000004">
    <property type="entry name" value="Pyruvate kinase"/>
    <property type="match status" value="1"/>
</dbReference>
<dbReference type="Gene3D" id="3.20.20.60">
    <property type="entry name" value="Phosphoenolpyruvate-binding domains"/>
    <property type="match status" value="1"/>
</dbReference>
<dbReference type="Gene3D" id="2.40.33.10">
    <property type="entry name" value="PK beta-barrel domain-like"/>
    <property type="match status" value="1"/>
</dbReference>
<dbReference type="Gene3D" id="3.40.1380.20">
    <property type="entry name" value="Pyruvate kinase, C-terminal domain"/>
    <property type="match status" value="1"/>
</dbReference>
<dbReference type="InterPro" id="IPR001697">
    <property type="entry name" value="Pyr_Knase"/>
</dbReference>
<dbReference type="InterPro" id="IPR015813">
    <property type="entry name" value="Pyrv/PenolPyrv_kinase-like_dom"/>
</dbReference>
<dbReference type="InterPro" id="IPR040442">
    <property type="entry name" value="Pyrv_kinase-like_dom_sf"/>
</dbReference>
<dbReference type="InterPro" id="IPR011037">
    <property type="entry name" value="Pyrv_Knase-like_insert_dom_sf"/>
</dbReference>
<dbReference type="InterPro" id="IPR018209">
    <property type="entry name" value="Pyrv_Knase_AS"/>
</dbReference>
<dbReference type="InterPro" id="IPR015793">
    <property type="entry name" value="Pyrv_Knase_brl"/>
</dbReference>
<dbReference type="InterPro" id="IPR015795">
    <property type="entry name" value="Pyrv_Knase_C"/>
</dbReference>
<dbReference type="InterPro" id="IPR036918">
    <property type="entry name" value="Pyrv_Knase_C_sf"/>
</dbReference>
<dbReference type="InterPro" id="IPR015806">
    <property type="entry name" value="Pyrv_Knase_insert_dom_sf"/>
</dbReference>
<dbReference type="NCBIfam" id="NF004491">
    <property type="entry name" value="PRK05826.1"/>
    <property type="match status" value="1"/>
</dbReference>
<dbReference type="NCBIfam" id="TIGR01064">
    <property type="entry name" value="pyruv_kin"/>
    <property type="match status" value="1"/>
</dbReference>
<dbReference type="PANTHER" id="PTHR11817">
    <property type="entry name" value="PYRUVATE KINASE"/>
    <property type="match status" value="1"/>
</dbReference>
<dbReference type="Pfam" id="PF00224">
    <property type="entry name" value="PK"/>
    <property type="match status" value="1"/>
</dbReference>
<dbReference type="Pfam" id="PF02887">
    <property type="entry name" value="PK_C"/>
    <property type="match status" value="1"/>
</dbReference>
<dbReference type="PRINTS" id="PR01050">
    <property type="entry name" value="PYRUVTKNASE"/>
</dbReference>
<dbReference type="SUPFAM" id="SSF51621">
    <property type="entry name" value="Phosphoenolpyruvate/pyruvate domain"/>
    <property type="match status" value="1"/>
</dbReference>
<dbReference type="SUPFAM" id="SSF50800">
    <property type="entry name" value="PK beta-barrel domain-like"/>
    <property type="match status" value="1"/>
</dbReference>
<dbReference type="SUPFAM" id="SSF52935">
    <property type="entry name" value="PK C-terminal domain-like"/>
    <property type="match status" value="1"/>
</dbReference>
<dbReference type="PROSITE" id="PS00110">
    <property type="entry name" value="PYRUVATE_KINASE"/>
    <property type="match status" value="1"/>
</dbReference>
<gene>
    <name type="primary">pykA</name>
    <name type="ordered locus">HI_1573</name>
</gene>
<sequence>MSRRLRRTKIVCTMGPSTDRDNNLEKIIAAGANVVRMNFSHGTPDDHIGRAERVRSIAKKLGKTVAILGDLQGPKIRVSTFKDGKIFLNVGDKFILDAELPKGEGTQESVGLDYKTLPQDVVPGDILLLDDGRVQLKVLSTDGAKVFTEVTVGGPLSNNKGINKLGGGLSADALTEKDKADIITAARIGVDFLAVSFPRSSADLNYARELAQQAGLNAKIVAKVERAETVANDEAMDDIILASDVIMVARGDLGVEIGDPELVGVQKKLIRRSRQLNRAVITATQMMESMISNPMPTRAEVMDVANAVLDGTDAVMLSAETAAGQYPSETVAAMASVCLGAEKMPSINVSRHRMDKEFETIEESVAMSAMYAANHMKGVAAIVTLSSTGRTPLLMSRISSGLPIFALSRNQETLNLCALYRGVTPIYHGEESRTEAGAKAAPQSLKEKGYLSTGDLVLVTQGGQGATQTNVCRTLIVE</sequence>
<reference key="1">
    <citation type="journal article" date="1995" name="Science">
        <title>Whole-genome random sequencing and assembly of Haemophilus influenzae Rd.</title>
        <authorList>
            <person name="Fleischmann R.D."/>
            <person name="Adams M.D."/>
            <person name="White O."/>
            <person name="Clayton R.A."/>
            <person name="Kirkness E.F."/>
            <person name="Kerlavage A.R."/>
            <person name="Bult C.J."/>
            <person name="Tomb J.-F."/>
            <person name="Dougherty B.A."/>
            <person name="Merrick J.M."/>
            <person name="McKenney K."/>
            <person name="Sutton G.G."/>
            <person name="FitzHugh W."/>
            <person name="Fields C.A."/>
            <person name="Gocayne J.D."/>
            <person name="Scott J.D."/>
            <person name="Shirley R."/>
            <person name="Liu L.-I."/>
            <person name="Glodek A."/>
            <person name="Kelley J.M."/>
            <person name="Weidman J.F."/>
            <person name="Phillips C.A."/>
            <person name="Spriggs T."/>
            <person name="Hedblom E."/>
            <person name="Cotton M.D."/>
            <person name="Utterback T.R."/>
            <person name="Hanna M.C."/>
            <person name="Nguyen D.T."/>
            <person name="Saudek D.M."/>
            <person name="Brandon R.C."/>
            <person name="Fine L.D."/>
            <person name="Fritchman J.L."/>
            <person name="Fuhrmann J.L."/>
            <person name="Geoghagen N.S.M."/>
            <person name="Gnehm C.L."/>
            <person name="McDonald L.A."/>
            <person name="Small K.V."/>
            <person name="Fraser C.M."/>
            <person name="Smith H.O."/>
            <person name="Venter J.C."/>
        </authorList>
    </citation>
    <scope>NUCLEOTIDE SEQUENCE [LARGE SCALE GENOMIC DNA]</scope>
    <source>
        <strain>ATCC 51907 / DSM 11121 / KW20 / Rd</strain>
    </source>
</reference>
<organism>
    <name type="scientific">Haemophilus influenzae (strain ATCC 51907 / DSM 11121 / KW20 / Rd)</name>
    <dbReference type="NCBI Taxonomy" id="71421"/>
    <lineage>
        <taxon>Bacteria</taxon>
        <taxon>Pseudomonadati</taxon>
        <taxon>Pseudomonadota</taxon>
        <taxon>Gammaproteobacteria</taxon>
        <taxon>Pasteurellales</taxon>
        <taxon>Pasteurellaceae</taxon>
        <taxon>Haemophilus</taxon>
    </lineage>
</organism>
<proteinExistence type="inferred from homology"/>
<comment type="catalytic activity">
    <reaction>
        <text>pyruvate + ATP = phosphoenolpyruvate + ADP + H(+)</text>
        <dbReference type="Rhea" id="RHEA:18157"/>
        <dbReference type="ChEBI" id="CHEBI:15361"/>
        <dbReference type="ChEBI" id="CHEBI:15378"/>
        <dbReference type="ChEBI" id="CHEBI:30616"/>
        <dbReference type="ChEBI" id="CHEBI:58702"/>
        <dbReference type="ChEBI" id="CHEBI:456216"/>
        <dbReference type="EC" id="2.7.1.40"/>
    </reaction>
</comment>
<comment type="cofactor">
    <cofactor evidence="1">
        <name>Mg(2+)</name>
        <dbReference type="ChEBI" id="CHEBI:18420"/>
    </cofactor>
</comment>
<comment type="cofactor">
    <cofactor evidence="1">
        <name>K(+)</name>
        <dbReference type="ChEBI" id="CHEBI:29103"/>
    </cofactor>
</comment>
<comment type="activity regulation">
    <text evidence="1">Allosterically activated by AMP and by several sugar phosphates. Belongs to type II PK (By similarity).</text>
</comment>
<comment type="pathway">
    <text>Carbohydrate degradation; glycolysis; pyruvate from D-glyceraldehyde 3-phosphate: step 5/5.</text>
</comment>
<comment type="subunit">
    <text evidence="1">Homotetramer.</text>
</comment>
<comment type="similarity">
    <text evidence="3">Belongs to the pyruvate kinase family.</text>
</comment>
<keyword id="KW-0021">Allosteric enzyme</keyword>
<keyword id="KW-0067">ATP-binding</keyword>
<keyword id="KW-0324">Glycolysis</keyword>
<keyword id="KW-0418">Kinase</keyword>
<keyword id="KW-0460">Magnesium</keyword>
<keyword id="KW-0479">Metal-binding</keyword>
<keyword id="KW-0547">Nucleotide-binding</keyword>
<keyword id="KW-0630">Potassium</keyword>
<keyword id="KW-0670">Pyruvate</keyword>
<keyword id="KW-1185">Reference proteome</keyword>
<keyword id="KW-0808">Transferase</keyword>
<name>KPYK_HAEIN</name>